<evidence type="ECO:0000255" key="1">
    <source>
        <dbReference type="HAMAP-Rule" id="MF_00372"/>
    </source>
</evidence>
<protein>
    <recommendedName>
        <fullName evidence="1">Imidazolonepropionase</fullName>
        <ecNumber evidence="1">3.5.2.7</ecNumber>
    </recommendedName>
    <alternativeName>
        <fullName evidence="1">Imidazolone-5-propionate hydrolase</fullName>
    </alternativeName>
</protein>
<accession>B4SP54</accession>
<dbReference type="EC" id="3.5.2.7" evidence="1"/>
<dbReference type="EMBL" id="CP001111">
    <property type="protein sequence ID" value="ACF52249.1"/>
    <property type="molecule type" value="Genomic_DNA"/>
</dbReference>
<dbReference type="RefSeq" id="WP_012511522.1">
    <property type="nucleotide sequence ID" value="NC_011071.1"/>
</dbReference>
<dbReference type="SMR" id="B4SP54"/>
<dbReference type="STRING" id="391008.Smal_2549"/>
<dbReference type="KEGG" id="smt:Smal_2549"/>
<dbReference type="eggNOG" id="COG1228">
    <property type="taxonomic scope" value="Bacteria"/>
</dbReference>
<dbReference type="HOGENOM" id="CLU_041647_0_0_6"/>
<dbReference type="OrthoDB" id="9776455at2"/>
<dbReference type="UniPathway" id="UPA00379">
    <property type="reaction ID" value="UER00551"/>
</dbReference>
<dbReference type="Proteomes" id="UP000001867">
    <property type="component" value="Chromosome"/>
</dbReference>
<dbReference type="GO" id="GO:0005737">
    <property type="term" value="C:cytoplasm"/>
    <property type="evidence" value="ECO:0007669"/>
    <property type="project" value="UniProtKB-SubCell"/>
</dbReference>
<dbReference type="GO" id="GO:0050480">
    <property type="term" value="F:imidazolonepropionase activity"/>
    <property type="evidence" value="ECO:0007669"/>
    <property type="project" value="UniProtKB-UniRule"/>
</dbReference>
<dbReference type="GO" id="GO:0005506">
    <property type="term" value="F:iron ion binding"/>
    <property type="evidence" value="ECO:0007669"/>
    <property type="project" value="UniProtKB-UniRule"/>
</dbReference>
<dbReference type="GO" id="GO:0008270">
    <property type="term" value="F:zinc ion binding"/>
    <property type="evidence" value="ECO:0007669"/>
    <property type="project" value="UniProtKB-UniRule"/>
</dbReference>
<dbReference type="GO" id="GO:0019556">
    <property type="term" value="P:L-histidine catabolic process to glutamate and formamide"/>
    <property type="evidence" value="ECO:0007669"/>
    <property type="project" value="UniProtKB-UniPathway"/>
</dbReference>
<dbReference type="GO" id="GO:0019557">
    <property type="term" value="P:L-histidine catabolic process to glutamate and formate"/>
    <property type="evidence" value="ECO:0007669"/>
    <property type="project" value="UniProtKB-UniPathway"/>
</dbReference>
<dbReference type="CDD" id="cd01296">
    <property type="entry name" value="Imidazolone-5PH"/>
    <property type="match status" value="1"/>
</dbReference>
<dbReference type="FunFam" id="3.20.20.140:FF:000007">
    <property type="entry name" value="Imidazolonepropionase"/>
    <property type="match status" value="1"/>
</dbReference>
<dbReference type="Gene3D" id="3.20.20.140">
    <property type="entry name" value="Metal-dependent hydrolases"/>
    <property type="match status" value="1"/>
</dbReference>
<dbReference type="Gene3D" id="2.30.40.10">
    <property type="entry name" value="Urease, subunit C, domain 1"/>
    <property type="match status" value="1"/>
</dbReference>
<dbReference type="HAMAP" id="MF_00372">
    <property type="entry name" value="HutI"/>
    <property type="match status" value="1"/>
</dbReference>
<dbReference type="InterPro" id="IPR006680">
    <property type="entry name" value="Amidohydro-rel"/>
</dbReference>
<dbReference type="InterPro" id="IPR005920">
    <property type="entry name" value="HutI"/>
</dbReference>
<dbReference type="InterPro" id="IPR011059">
    <property type="entry name" value="Metal-dep_hydrolase_composite"/>
</dbReference>
<dbReference type="InterPro" id="IPR032466">
    <property type="entry name" value="Metal_Hydrolase"/>
</dbReference>
<dbReference type="NCBIfam" id="TIGR01224">
    <property type="entry name" value="hutI"/>
    <property type="match status" value="1"/>
</dbReference>
<dbReference type="PANTHER" id="PTHR42752">
    <property type="entry name" value="IMIDAZOLONEPROPIONASE"/>
    <property type="match status" value="1"/>
</dbReference>
<dbReference type="PANTHER" id="PTHR42752:SF1">
    <property type="entry name" value="IMIDAZOLONEPROPIONASE-RELATED"/>
    <property type="match status" value="1"/>
</dbReference>
<dbReference type="Pfam" id="PF01979">
    <property type="entry name" value="Amidohydro_1"/>
    <property type="match status" value="1"/>
</dbReference>
<dbReference type="SUPFAM" id="SSF51338">
    <property type="entry name" value="Composite domain of metallo-dependent hydrolases"/>
    <property type="match status" value="1"/>
</dbReference>
<dbReference type="SUPFAM" id="SSF51556">
    <property type="entry name" value="Metallo-dependent hydrolases"/>
    <property type="match status" value="1"/>
</dbReference>
<comment type="function">
    <text evidence="1">Catalyzes the hydrolytic cleavage of the carbon-nitrogen bond in imidazolone-5-propanoate to yield N-formimidoyl-L-glutamate. It is the third step in the universal histidine degradation pathway.</text>
</comment>
<comment type="catalytic activity">
    <reaction evidence="1">
        <text>4-imidazolone-5-propanoate + H2O = N-formimidoyl-L-glutamate</text>
        <dbReference type="Rhea" id="RHEA:23660"/>
        <dbReference type="ChEBI" id="CHEBI:15377"/>
        <dbReference type="ChEBI" id="CHEBI:58928"/>
        <dbReference type="ChEBI" id="CHEBI:77893"/>
        <dbReference type="EC" id="3.5.2.7"/>
    </reaction>
</comment>
<comment type="cofactor">
    <cofactor evidence="1">
        <name>Zn(2+)</name>
        <dbReference type="ChEBI" id="CHEBI:29105"/>
    </cofactor>
    <cofactor evidence="1">
        <name>Fe(3+)</name>
        <dbReference type="ChEBI" id="CHEBI:29034"/>
    </cofactor>
    <text evidence="1">Binds 1 zinc or iron ion per subunit.</text>
</comment>
<comment type="pathway">
    <text evidence="1">Amino-acid degradation; L-histidine degradation into L-glutamate; N-formimidoyl-L-glutamate from L-histidine: step 3/3.</text>
</comment>
<comment type="subcellular location">
    <subcellularLocation>
        <location evidence="1">Cytoplasm</location>
    </subcellularLocation>
</comment>
<comment type="similarity">
    <text evidence="1">Belongs to the metallo-dependent hydrolases superfamily. HutI family.</text>
</comment>
<feature type="chain" id="PRO_1000121559" description="Imidazolonepropionase">
    <location>
        <begin position="1"/>
        <end position="407"/>
    </location>
</feature>
<feature type="binding site" evidence="1">
    <location>
        <position position="68"/>
    </location>
    <ligand>
        <name>Fe(3+)</name>
        <dbReference type="ChEBI" id="CHEBI:29034"/>
    </ligand>
</feature>
<feature type="binding site" evidence="1">
    <location>
        <position position="68"/>
    </location>
    <ligand>
        <name>Zn(2+)</name>
        <dbReference type="ChEBI" id="CHEBI:29105"/>
    </ligand>
</feature>
<feature type="binding site" evidence="1">
    <location>
        <position position="70"/>
    </location>
    <ligand>
        <name>Fe(3+)</name>
        <dbReference type="ChEBI" id="CHEBI:29034"/>
    </ligand>
</feature>
<feature type="binding site" evidence="1">
    <location>
        <position position="70"/>
    </location>
    <ligand>
        <name>Zn(2+)</name>
        <dbReference type="ChEBI" id="CHEBI:29105"/>
    </ligand>
</feature>
<feature type="binding site" evidence="1">
    <location>
        <position position="77"/>
    </location>
    <ligand>
        <name>4-imidazolone-5-propanoate</name>
        <dbReference type="ChEBI" id="CHEBI:77893"/>
    </ligand>
</feature>
<feature type="binding site" evidence="1">
    <location>
        <position position="140"/>
    </location>
    <ligand>
        <name>4-imidazolone-5-propanoate</name>
        <dbReference type="ChEBI" id="CHEBI:77893"/>
    </ligand>
</feature>
<feature type="binding site" evidence="1">
    <location>
        <position position="140"/>
    </location>
    <ligand>
        <name>N-formimidoyl-L-glutamate</name>
        <dbReference type="ChEBI" id="CHEBI:58928"/>
    </ligand>
</feature>
<feature type="binding site" evidence="1">
    <location>
        <position position="173"/>
    </location>
    <ligand>
        <name>4-imidazolone-5-propanoate</name>
        <dbReference type="ChEBI" id="CHEBI:77893"/>
    </ligand>
</feature>
<feature type="binding site" evidence="1">
    <location>
        <position position="236"/>
    </location>
    <ligand>
        <name>Fe(3+)</name>
        <dbReference type="ChEBI" id="CHEBI:29034"/>
    </ligand>
</feature>
<feature type="binding site" evidence="1">
    <location>
        <position position="236"/>
    </location>
    <ligand>
        <name>Zn(2+)</name>
        <dbReference type="ChEBI" id="CHEBI:29105"/>
    </ligand>
</feature>
<feature type="binding site" evidence="1">
    <location>
        <position position="239"/>
    </location>
    <ligand>
        <name>4-imidazolone-5-propanoate</name>
        <dbReference type="ChEBI" id="CHEBI:77893"/>
    </ligand>
</feature>
<feature type="binding site" evidence="1">
    <location>
        <position position="311"/>
    </location>
    <ligand>
        <name>Fe(3+)</name>
        <dbReference type="ChEBI" id="CHEBI:29034"/>
    </ligand>
</feature>
<feature type="binding site" evidence="1">
    <location>
        <position position="311"/>
    </location>
    <ligand>
        <name>Zn(2+)</name>
        <dbReference type="ChEBI" id="CHEBI:29105"/>
    </ligand>
</feature>
<feature type="binding site" evidence="1">
    <location>
        <position position="313"/>
    </location>
    <ligand>
        <name>N-formimidoyl-L-glutamate</name>
        <dbReference type="ChEBI" id="CHEBI:58928"/>
    </ligand>
</feature>
<feature type="binding site" evidence="1">
    <location>
        <position position="315"/>
    </location>
    <ligand>
        <name>N-formimidoyl-L-glutamate</name>
        <dbReference type="ChEBI" id="CHEBI:58928"/>
    </ligand>
</feature>
<feature type="binding site" evidence="1">
    <location>
        <position position="316"/>
    </location>
    <ligand>
        <name>4-imidazolone-5-propanoate</name>
        <dbReference type="ChEBI" id="CHEBI:77893"/>
    </ligand>
</feature>
<reference key="1">
    <citation type="submission" date="2008-06" db="EMBL/GenBank/DDBJ databases">
        <title>Complete sequence of Stenotrophomonas maltophilia R551-3.</title>
        <authorList>
            <consortium name="US DOE Joint Genome Institute"/>
            <person name="Lucas S."/>
            <person name="Copeland A."/>
            <person name="Lapidus A."/>
            <person name="Glavina del Rio T."/>
            <person name="Dalin E."/>
            <person name="Tice H."/>
            <person name="Pitluck S."/>
            <person name="Chain P."/>
            <person name="Malfatti S."/>
            <person name="Shin M."/>
            <person name="Vergez L."/>
            <person name="Lang D."/>
            <person name="Schmutz J."/>
            <person name="Larimer F."/>
            <person name="Land M."/>
            <person name="Hauser L."/>
            <person name="Kyrpides N."/>
            <person name="Mikhailova N."/>
            <person name="Taghavi S."/>
            <person name="Monchy S."/>
            <person name="Newman L."/>
            <person name="Vangronsveld J."/>
            <person name="van der Lelie D."/>
            <person name="Richardson P."/>
        </authorList>
    </citation>
    <scope>NUCLEOTIDE SEQUENCE [LARGE SCALE GENOMIC DNA]</scope>
    <source>
        <strain>R551-3</strain>
    </source>
</reference>
<organism>
    <name type="scientific">Stenotrophomonas maltophilia (strain R551-3)</name>
    <dbReference type="NCBI Taxonomy" id="391008"/>
    <lineage>
        <taxon>Bacteria</taxon>
        <taxon>Pseudomonadati</taxon>
        <taxon>Pseudomonadota</taxon>
        <taxon>Gammaproteobacteria</taxon>
        <taxon>Lysobacterales</taxon>
        <taxon>Lysobacteraceae</taxon>
        <taxon>Stenotrophomonas</taxon>
        <taxon>Stenotrophomonas maltophilia group</taxon>
    </lineage>
</organism>
<keyword id="KW-0963">Cytoplasm</keyword>
<keyword id="KW-0369">Histidine metabolism</keyword>
<keyword id="KW-0378">Hydrolase</keyword>
<keyword id="KW-0408">Iron</keyword>
<keyword id="KW-0479">Metal-binding</keyword>
<keyword id="KW-0862">Zinc</keyword>
<name>HUTI_STRM5</name>
<proteinExistence type="inferred from homology"/>
<gene>
    <name evidence="1" type="primary">hutI</name>
    <name type="ordered locus">Smal_2549</name>
</gene>
<sequence length="407" mass="42998">MHVDTLWSNVHLITLDGEGLGVIRDGVLACADGRIVHVGPAGSDANLRPTTRIDGEGRWMSPGLIDCHTHLVYAGNRANEFEQRLQGISYAEIARAGGGIVSTVRATRAATPEQLASESRPRLLAMRAEGVTTLEIKSGYGLTLPDERKQLQVARALGEGCRVNVVTTFLGAHAIPPGREAQEYTDEVCNVMIPAIAAEGLAEAVDVFCENIAFSPAQARQVFEAARAHGLAIKIHAEQLSNQHGAELAASFGALSADHIEHLDDAGIAAMAAAGTVAVLLPGAFYFTRDTTLPPIAALRAAGVPLALATDSNPGTSPLTSPLLAMNMGATLFRLTVDECIAGFTREAARALGRGDRIGRLAIGMDCDLAIWDIDAPADLVYRIGFNPLHARVVRGQPDLPASWSNT</sequence>